<organism>
    <name type="scientific">Arabidopsis thaliana</name>
    <name type="common">Mouse-ear cress</name>
    <dbReference type="NCBI Taxonomy" id="3702"/>
    <lineage>
        <taxon>Eukaryota</taxon>
        <taxon>Viridiplantae</taxon>
        <taxon>Streptophyta</taxon>
        <taxon>Embryophyta</taxon>
        <taxon>Tracheophyta</taxon>
        <taxon>Spermatophyta</taxon>
        <taxon>Magnoliopsida</taxon>
        <taxon>eudicotyledons</taxon>
        <taxon>Gunneridae</taxon>
        <taxon>Pentapetalae</taxon>
        <taxon>rosids</taxon>
        <taxon>malvids</taxon>
        <taxon>Brassicales</taxon>
        <taxon>Brassicaceae</taxon>
        <taxon>Camelineae</taxon>
        <taxon>Arabidopsis</taxon>
    </lineage>
</organism>
<dbReference type="EMBL" id="U32344">
    <property type="protein sequence ID" value="AAC49148.1"/>
    <property type="molecule type" value="mRNA"/>
</dbReference>
<dbReference type="EMBL" id="AC003113">
    <property type="protein sequence ID" value="AAF70849.1"/>
    <property type="molecule type" value="Genomic_DNA"/>
</dbReference>
<dbReference type="EMBL" id="CP002684">
    <property type="protein sequence ID" value="AEE33958.1"/>
    <property type="molecule type" value="Genomic_DNA"/>
</dbReference>
<dbReference type="EMBL" id="AY080857">
    <property type="protein sequence ID" value="AAL87330.1"/>
    <property type="molecule type" value="mRNA"/>
</dbReference>
<dbReference type="PIR" id="S68456">
    <property type="entry name" value="S68456"/>
</dbReference>
<dbReference type="PIR" id="T01446">
    <property type="entry name" value="T01446"/>
</dbReference>
<dbReference type="RefSeq" id="NP_176426.1">
    <property type="nucleotide sequence ID" value="NM_104916.4"/>
</dbReference>
<dbReference type="SMR" id="Q38874"/>
<dbReference type="BioGRID" id="27755">
    <property type="interactions" value="17"/>
</dbReference>
<dbReference type="FunCoup" id="Q38874">
    <property type="interactions" value="234"/>
</dbReference>
<dbReference type="IntAct" id="Q38874">
    <property type="interactions" value="29"/>
</dbReference>
<dbReference type="STRING" id="3702.Q38874"/>
<dbReference type="iPTMnet" id="Q38874"/>
<dbReference type="PaxDb" id="3702-AT1G62360.1"/>
<dbReference type="ProteomicsDB" id="245218"/>
<dbReference type="EnsemblPlants" id="AT1G62360.1">
    <property type="protein sequence ID" value="AT1G62360.1"/>
    <property type="gene ID" value="AT1G62360"/>
</dbReference>
<dbReference type="GeneID" id="842534"/>
<dbReference type="Gramene" id="AT1G62360.1">
    <property type="protein sequence ID" value="AT1G62360.1"/>
    <property type="gene ID" value="AT1G62360"/>
</dbReference>
<dbReference type="KEGG" id="ath:AT1G62360"/>
<dbReference type="Araport" id="AT1G62360"/>
<dbReference type="TAIR" id="AT1G62360">
    <property type="gene designation" value="STM"/>
</dbReference>
<dbReference type="eggNOG" id="KOG0773">
    <property type="taxonomic scope" value="Eukaryota"/>
</dbReference>
<dbReference type="HOGENOM" id="CLU_040111_0_0_1"/>
<dbReference type="InParanoid" id="Q38874"/>
<dbReference type="OMA" id="DWWGRHY"/>
<dbReference type="OrthoDB" id="10056939at2759"/>
<dbReference type="PhylomeDB" id="Q38874"/>
<dbReference type="PRO" id="PR:Q38874"/>
<dbReference type="Proteomes" id="UP000006548">
    <property type="component" value="Chromosome 1"/>
</dbReference>
<dbReference type="ExpressionAtlas" id="Q38874">
    <property type="expression patterns" value="baseline and differential"/>
</dbReference>
<dbReference type="GO" id="GO:0005737">
    <property type="term" value="C:cytoplasm"/>
    <property type="evidence" value="ECO:0000314"/>
    <property type="project" value="UniProtKB"/>
</dbReference>
<dbReference type="GO" id="GO:0005768">
    <property type="term" value="C:endosome"/>
    <property type="evidence" value="ECO:0000314"/>
    <property type="project" value="UniProtKB"/>
</dbReference>
<dbReference type="GO" id="GO:0015630">
    <property type="term" value="C:microtubule cytoskeleton"/>
    <property type="evidence" value="ECO:0000314"/>
    <property type="project" value="UniProtKB"/>
</dbReference>
<dbReference type="GO" id="GO:0005634">
    <property type="term" value="C:nucleus"/>
    <property type="evidence" value="ECO:0000314"/>
    <property type="project" value="UniProtKB"/>
</dbReference>
<dbReference type="GO" id="GO:0005886">
    <property type="term" value="C:plasma membrane"/>
    <property type="evidence" value="ECO:0000314"/>
    <property type="project" value="UniProtKB"/>
</dbReference>
<dbReference type="GO" id="GO:0009506">
    <property type="term" value="C:plasmodesma"/>
    <property type="evidence" value="ECO:0000314"/>
    <property type="project" value="UniProtKB"/>
</dbReference>
<dbReference type="GO" id="GO:0003677">
    <property type="term" value="F:DNA binding"/>
    <property type="evidence" value="ECO:0007669"/>
    <property type="project" value="UniProtKB-KW"/>
</dbReference>
<dbReference type="GO" id="GO:0003700">
    <property type="term" value="F:DNA-binding transcription factor activity"/>
    <property type="evidence" value="ECO:0000250"/>
    <property type="project" value="TAIR"/>
</dbReference>
<dbReference type="GO" id="GO:0000981">
    <property type="term" value="F:DNA-binding transcription factor activity, RNA polymerase II-specific"/>
    <property type="evidence" value="ECO:0007669"/>
    <property type="project" value="InterPro"/>
</dbReference>
<dbReference type="GO" id="GO:0042803">
    <property type="term" value="F:protein homodimerization activity"/>
    <property type="evidence" value="ECO:0000314"/>
    <property type="project" value="UniProtKB"/>
</dbReference>
<dbReference type="GO" id="GO:0003723">
    <property type="term" value="F:RNA binding"/>
    <property type="evidence" value="ECO:0000314"/>
    <property type="project" value="UniProtKB"/>
</dbReference>
<dbReference type="GO" id="GO:0048440">
    <property type="term" value="P:carpel development"/>
    <property type="evidence" value="ECO:0000315"/>
    <property type="project" value="TAIR"/>
</dbReference>
<dbReference type="GO" id="GO:0009691">
    <property type="term" value="P:cytokinin biosynthetic process"/>
    <property type="evidence" value="ECO:0000304"/>
    <property type="project" value="TAIR"/>
</dbReference>
<dbReference type="GO" id="GO:0010582">
    <property type="term" value="P:floral meristem determinacy"/>
    <property type="evidence" value="ECO:0000316"/>
    <property type="project" value="TAIR"/>
</dbReference>
<dbReference type="GO" id="GO:0010497">
    <property type="term" value="P:plasmodesmata-mediated intercellular transport"/>
    <property type="evidence" value="ECO:0000250"/>
    <property type="project" value="UniProtKB"/>
</dbReference>
<dbReference type="GO" id="GO:0009934">
    <property type="term" value="P:regulation of meristem structural organization"/>
    <property type="evidence" value="ECO:0000315"/>
    <property type="project" value="TAIR"/>
</dbReference>
<dbReference type="GO" id="GO:0019827">
    <property type="term" value="P:stem cell population maintenance"/>
    <property type="evidence" value="ECO:0000304"/>
    <property type="project" value="TAIR"/>
</dbReference>
<dbReference type="CDD" id="cd00086">
    <property type="entry name" value="homeodomain"/>
    <property type="match status" value="1"/>
</dbReference>
<dbReference type="FunFam" id="1.10.10.60:FF:000076">
    <property type="entry name" value="Homeobox protein knotted-1-like 2"/>
    <property type="match status" value="1"/>
</dbReference>
<dbReference type="Gene3D" id="1.10.10.60">
    <property type="entry name" value="Homeodomain-like"/>
    <property type="match status" value="1"/>
</dbReference>
<dbReference type="InterPro" id="IPR005539">
    <property type="entry name" value="ELK_dom"/>
</dbReference>
<dbReference type="InterPro" id="IPR001356">
    <property type="entry name" value="HD"/>
</dbReference>
<dbReference type="InterPro" id="IPR017970">
    <property type="entry name" value="Homeobox_CS"/>
</dbReference>
<dbReference type="InterPro" id="IPR009057">
    <property type="entry name" value="Homeodomain-like_sf"/>
</dbReference>
<dbReference type="InterPro" id="IPR008422">
    <property type="entry name" value="KN_HD"/>
</dbReference>
<dbReference type="InterPro" id="IPR005540">
    <property type="entry name" value="KNOX1"/>
</dbReference>
<dbReference type="InterPro" id="IPR005541">
    <property type="entry name" value="KNOX2"/>
</dbReference>
<dbReference type="InterPro" id="IPR050224">
    <property type="entry name" value="TALE_homeobox"/>
</dbReference>
<dbReference type="PANTHER" id="PTHR11850">
    <property type="entry name" value="HOMEOBOX PROTEIN TRANSCRIPTION FACTORS"/>
    <property type="match status" value="1"/>
</dbReference>
<dbReference type="Pfam" id="PF03789">
    <property type="entry name" value="ELK"/>
    <property type="match status" value="1"/>
</dbReference>
<dbReference type="Pfam" id="PF05920">
    <property type="entry name" value="Homeobox_KN"/>
    <property type="match status" value="1"/>
</dbReference>
<dbReference type="Pfam" id="PF03790">
    <property type="entry name" value="KNOX1"/>
    <property type="match status" value="1"/>
</dbReference>
<dbReference type="Pfam" id="PF03791">
    <property type="entry name" value="KNOX2"/>
    <property type="match status" value="1"/>
</dbReference>
<dbReference type="SMART" id="SM01188">
    <property type="entry name" value="ELK"/>
    <property type="match status" value="1"/>
</dbReference>
<dbReference type="SMART" id="SM00389">
    <property type="entry name" value="HOX"/>
    <property type="match status" value="1"/>
</dbReference>
<dbReference type="SMART" id="SM01255">
    <property type="entry name" value="KNOX1"/>
    <property type="match status" value="1"/>
</dbReference>
<dbReference type="SMART" id="SM01256">
    <property type="entry name" value="KNOX2"/>
    <property type="match status" value="1"/>
</dbReference>
<dbReference type="SUPFAM" id="SSF46689">
    <property type="entry name" value="Homeodomain-like"/>
    <property type="match status" value="1"/>
</dbReference>
<dbReference type="PROSITE" id="PS51213">
    <property type="entry name" value="ELK"/>
    <property type="match status" value="1"/>
</dbReference>
<dbReference type="PROSITE" id="PS00027">
    <property type="entry name" value="HOMEOBOX_1"/>
    <property type="match status" value="1"/>
</dbReference>
<dbReference type="PROSITE" id="PS50071">
    <property type="entry name" value="HOMEOBOX_2"/>
    <property type="match status" value="1"/>
</dbReference>
<sequence length="382" mass="42753">MESGSNSTSCPMAFAGDNSDGPMCPMMMMMPPIMTSHQHHGHDHQHQQQEHDGYAYQSHHQQSSSLFLQSLAPPQGTKNKVASSSSPSSCAPAYSLMEIHHNEIVAGGINPCSSSSSSASVKAKIMAHPHYHRLLAAYVNCQKVGAPPEVVARLEEACSSAAAAAASMGPTGCLGEDPGLDQFMEAYCEMLVKYEQELSKPFKEAMVFLQRVECQFKSLSLSSPSSFSGYGETAIDRNNNGSSEEEVDMNNEFVDPQAEDRELKGQLLRKYSGYLGSLKQEFMKKRKKGKLPKEARQQLLDWWSRHYKWPYPSEQQKLALAESTGLDQKQINNWFINQRKRHWKPSEDMQFVVMDATHPHHYFMDNVLGNPFPMDHISSTML</sequence>
<accession>Q38874</accession>
<accession>Q8RXJ1</accession>
<accession>Q9MAV3</accession>
<comment type="function">
    <text evidence="1 5 6">Required for shoot apical meristem (SAM) formation during embryogenesis. Negatively regulates ASYMMETRIC LEAVES1 (AS1) and ASYMMETRIC LEAVES2 (AS2 or LBD6). Probably binds to the DNA sequence 5'-TGAC-3'. Binds to RNA (By similarity).</text>
</comment>
<comment type="subunit">
    <text evidence="8 9 10">Forms homodimers (PubMed:17965274). May form heterodimeric complexes with TALE/BELL proteins BEL1, BLH2, BLH3, BLH8/PNF, BLH9/PNY and ATH1. Interacts with CCT8 (PubMed:21868675). Binds to MBP2C; this interaction reduces RNA binding capacity (PubMed:17965274). Interacts with FTIP3 and FTIP4 (PubMed:29742441).</text>
</comment>
<comment type="interaction">
    <interactant intactId="EBI-530523">
        <id>Q38874</id>
    </interactant>
    <interactant intactId="EBI-912904">
        <id>P48731</id>
        <label>ATH1</label>
    </interactant>
    <organismsDiffer>false</organismsDiffer>
    <experiments>9</experiments>
</comment>
<comment type="interaction">
    <interactant intactId="EBI-530523">
        <id>Q38874</id>
    </interactant>
    <interactant intactId="EBI-1153783">
        <id>Q38897</id>
        <label>BEL1</label>
    </interactant>
    <organismsDiffer>false</organismsDiffer>
    <experiments>10</experiments>
</comment>
<comment type="interaction">
    <interactant intactId="EBI-530523">
        <id>Q38874</id>
    </interactant>
    <interactant intactId="EBI-1148379">
        <id>Q9SJ56</id>
        <label>BLH1</label>
    </interactant>
    <organismsDiffer>false</organismsDiffer>
    <experiments>3</experiments>
</comment>
<comment type="interaction">
    <interactant intactId="EBI-530523">
        <id>Q38874</id>
    </interactant>
    <interactant intactId="EBI-912915">
        <id>Q9FWS9</id>
        <label>BLH3</label>
    </interactant>
    <organismsDiffer>false</organismsDiffer>
    <experiments>4</experiments>
</comment>
<comment type="interaction">
    <interactant intactId="EBI-530523">
        <id>Q38874</id>
    </interactant>
    <interactant intactId="EBI-1153797">
        <id>Q94KL5</id>
        <label>BLH4</label>
    </interactant>
    <organismsDiffer>false</organismsDiffer>
    <experiments>3</experiments>
</comment>
<comment type="interaction">
    <interactant intactId="EBI-530523">
        <id>Q38874</id>
    </interactant>
    <interactant intactId="EBI-1153881">
        <id>O65685</id>
        <label>BLH6</label>
    </interactant>
    <organismsDiffer>false</organismsDiffer>
    <experiments>3</experiments>
</comment>
<comment type="interaction">
    <interactant intactId="EBI-530523">
        <id>Q38874</id>
    </interactant>
    <interactant intactId="EBI-530473">
        <id>Q9LZM8</id>
        <label>BLH9</label>
    </interactant>
    <organismsDiffer>false</organismsDiffer>
    <experiments>9</experiments>
</comment>
<comment type="subcellular location">
    <subcellularLocation>
        <location evidence="2 3 7 10">Nucleus</location>
    </subcellularLocation>
    <subcellularLocation>
        <location evidence="10">Cell junction</location>
        <location evidence="10">Plasmodesma</location>
    </subcellularLocation>
    <subcellularLocation>
        <location evidence="8">Cytoplasm</location>
    </subcellularLocation>
    <subcellularLocation>
        <location evidence="10">Endosome</location>
    </subcellularLocation>
    <subcellularLocation>
        <location evidence="10">Cell membrane</location>
    </subcellularLocation>
    <text evidence="7 8 10">Association with TALE/BELL proteins is necessary for nuclear location (PubMed:16513846). Dynamic localization via a plasmodesmata-mediated cell-to-cell transport. This shuttle is repressed by MBP2C binding in cytosolic punctae, at microtubules (PubMed:17965274). Subcellular localization and trafficking is regulated by FTIP3 and FTIP4, which promote endosome localization (PubMed:29742441).</text>
</comment>
<comment type="tissue specificity">
    <text>Expressed in all four types of shoot apical meristems (SAM) i.e. in vegetative, axillary, inflorescence and floral.</text>
</comment>
<comment type="developmental stage">
    <text evidence="5">First expressed in early to mid-globular-stage embryos. In late globular stage, detected as a stripe running medially across the top of the embryo. In heart stage embryo, expression is restricted to a notch between the cotyledons, in both hypodermal and protoderm cells. In the bending-cotyledon stage, localized in the SAM, but disappears from the boundary region of cotyledon margins (BCM). In seedlings and adult plants found in all shoot apical meristems. In the inflorescence meristem, expression disappears as floral buds are initiated and reappears in the later floral meristem where it is found in the central portion of the developing gyneocium. Also detected in the L1 layer of embryo.</text>
</comment>
<comment type="similarity">
    <text evidence="3">Belongs to the TALE/KNOX homeobox family.</text>
</comment>
<evidence type="ECO:0000250" key="1">
    <source>
        <dbReference type="UniProtKB" id="P24345"/>
    </source>
</evidence>
<evidence type="ECO:0000255" key="2">
    <source>
        <dbReference type="PROSITE-ProRule" id="PRU00108"/>
    </source>
</evidence>
<evidence type="ECO:0000255" key="3">
    <source>
        <dbReference type="PROSITE-ProRule" id="PRU00559"/>
    </source>
</evidence>
<evidence type="ECO:0000256" key="4">
    <source>
        <dbReference type="SAM" id="MobiDB-lite"/>
    </source>
</evidence>
<evidence type="ECO:0000269" key="5">
    <source>
    </source>
</evidence>
<evidence type="ECO:0000269" key="6">
    <source>
    </source>
</evidence>
<evidence type="ECO:0000269" key="7">
    <source>
    </source>
</evidence>
<evidence type="ECO:0000269" key="8">
    <source>
    </source>
</evidence>
<evidence type="ECO:0000269" key="9">
    <source>
    </source>
</evidence>
<evidence type="ECO:0000269" key="10">
    <source>
    </source>
</evidence>
<evidence type="ECO:0000303" key="11">
    <source>
    </source>
</evidence>
<evidence type="ECO:0000305" key="12"/>
<evidence type="ECO:0000312" key="13">
    <source>
        <dbReference type="Araport" id="AT1G62360"/>
    </source>
</evidence>
<evidence type="ECO:0000312" key="14">
    <source>
        <dbReference type="EMBL" id="AAF70849.1"/>
    </source>
</evidence>
<name>STM_ARATH</name>
<proteinExistence type="evidence at protein level"/>
<keyword id="KW-0965">Cell junction</keyword>
<keyword id="KW-1003">Cell membrane</keyword>
<keyword id="KW-0963">Cytoplasm</keyword>
<keyword id="KW-0217">Developmental protein</keyword>
<keyword id="KW-0238">DNA-binding</keyword>
<keyword id="KW-0967">Endosome</keyword>
<keyword id="KW-0371">Homeobox</keyword>
<keyword id="KW-0472">Membrane</keyword>
<keyword id="KW-0539">Nucleus</keyword>
<keyword id="KW-1185">Reference proteome</keyword>
<keyword id="KW-0694">RNA-binding</keyword>
<reference key="1">
    <citation type="journal article" date="1996" name="Nature">
        <title>A member of the KNOTTED class of homeodomain proteins encoded by the STM gene of Arabidopsis.</title>
        <authorList>
            <person name="Long J.A."/>
            <person name="Moan E.I."/>
            <person name="Medford J.I."/>
            <person name="Barton M.K."/>
        </authorList>
    </citation>
    <scope>NUCLEOTIDE SEQUENCE [MRNA]</scope>
    <source>
        <strain>cv. Wassilewskija</strain>
    </source>
</reference>
<reference key="2">
    <citation type="journal article" date="2000" name="Nature">
        <title>Sequence and analysis of chromosome 1 of the plant Arabidopsis thaliana.</title>
        <authorList>
            <person name="Theologis A."/>
            <person name="Ecker J.R."/>
            <person name="Palm C.J."/>
            <person name="Federspiel N.A."/>
            <person name="Kaul S."/>
            <person name="White O."/>
            <person name="Alonso J."/>
            <person name="Altafi H."/>
            <person name="Araujo R."/>
            <person name="Bowman C.L."/>
            <person name="Brooks S.Y."/>
            <person name="Buehler E."/>
            <person name="Chan A."/>
            <person name="Chao Q."/>
            <person name="Chen H."/>
            <person name="Cheuk R.F."/>
            <person name="Chin C.W."/>
            <person name="Chung M.K."/>
            <person name="Conn L."/>
            <person name="Conway A.B."/>
            <person name="Conway A.R."/>
            <person name="Creasy T.H."/>
            <person name="Dewar K."/>
            <person name="Dunn P."/>
            <person name="Etgu P."/>
            <person name="Feldblyum T.V."/>
            <person name="Feng J.-D."/>
            <person name="Fong B."/>
            <person name="Fujii C.Y."/>
            <person name="Gill J.E."/>
            <person name="Goldsmith A.D."/>
            <person name="Haas B."/>
            <person name="Hansen N.F."/>
            <person name="Hughes B."/>
            <person name="Huizar L."/>
            <person name="Hunter J.L."/>
            <person name="Jenkins J."/>
            <person name="Johnson-Hopson C."/>
            <person name="Khan S."/>
            <person name="Khaykin E."/>
            <person name="Kim C.J."/>
            <person name="Koo H.L."/>
            <person name="Kremenetskaia I."/>
            <person name="Kurtz D.B."/>
            <person name="Kwan A."/>
            <person name="Lam B."/>
            <person name="Langin-Hooper S."/>
            <person name="Lee A."/>
            <person name="Lee J.M."/>
            <person name="Lenz C.A."/>
            <person name="Li J.H."/>
            <person name="Li Y.-P."/>
            <person name="Lin X."/>
            <person name="Liu S.X."/>
            <person name="Liu Z.A."/>
            <person name="Luros J.S."/>
            <person name="Maiti R."/>
            <person name="Marziali A."/>
            <person name="Militscher J."/>
            <person name="Miranda M."/>
            <person name="Nguyen M."/>
            <person name="Nierman W.C."/>
            <person name="Osborne B.I."/>
            <person name="Pai G."/>
            <person name="Peterson J."/>
            <person name="Pham P.K."/>
            <person name="Rizzo M."/>
            <person name="Rooney T."/>
            <person name="Rowley D."/>
            <person name="Sakano H."/>
            <person name="Salzberg S.L."/>
            <person name="Schwartz J.R."/>
            <person name="Shinn P."/>
            <person name="Southwick A.M."/>
            <person name="Sun H."/>
            <person name="Tallon L.J."/>
            <person name="Tambunga G."/>
            <person name="Toriumi M.J."/>
            <person name="Town C.D."/>
            <person name="Utterback T."/>
            <person name="Van Aken S."/>
            <person name="Vaysberg M."/>
            <person name="Vysotskaia V.S."/>
            <person name="Walker M."/>
            <person name="Wu D."/>
            <person name="Yu G."/>
            <person name="Fraser C.M."/>
            <person name="Venter J.C."/>
            <person name="Davis R.W."/>
        </authorList>
    </citation>
    <scope>NUCLEOTIDE SEQUENCE [LARGE SCALE GENOMIC DNA]</scope>
    <source>
        <strain>cv. Columbia</strain>
    </source>
</reference>
<reference key="3">
    <citation type="journal article" date="2017" name="Plant J.">
        <title>Araport11: a complete reannotation of the Arabidopsis thaliana reference genome.</title>
        <authorList>
            <person name="Cheng C.Y."/>
            <person name="Krishnakumar V."/>
            <person name="Chan A.P."/>
            <person name="Thibaud-Nissen F."/>
            <person name="Schobel S."/>
            <person name="Town C.D."/>
        </authorList>
    </citation>
    <scope>GENOME REANNOTATION</scope>
    <source>
        <strain>cv. Columbia</strain>
    </source>
</reference>
<reference key="4">
    <citation type="journal article" date="2003" name="Science">
        <title>Empirical analysis of transcriptional activity in the Arabidopsis genome.</title>
        <authorList>
            <person name="Yamada K."/>
            <person name="Lim J."/>
            <person name="Dale J.M."/>
            <person name="Chen H."/>
            <person name="Shinn P."/>
            <person name="Palm C.J."/>
            <person name="Southwick A.M."/>
            <person name="Wu H.C."/>
            <person name="Kim C.J."/>
            <person name="Nguyen M."/>
            <person name="Pham P.K."/>
            <person name="Cheuk R.F."/>
            <person name="Karlin-Newmann G."/>
            <person name="Liu S.X."/>
            <person name="Lam B."/>
            <person name="Sakano H."/>
            <person name="Wu T."/>
            <person name="Yu G."/>
            <person name="Miranda M."/>
            <person name="Quach H.L."/>
            <person name="Tripp M."/>
            <person name="Chang C.H."/>
            <person name="Lee J.M."/>
            <person name="Toriumi M.J."/>
            <person name="Chan M.M."/>
            <person name="Tang C.C."/>
            <person name="Onodera C.S."/>
            <person name="Deng J.M."/>
            <person name="Akiyama K."/>
            <person name="Ansari Y."/>
            <person name="Arakawa T."/>
            <person name="Banh J."/>
            <person name="Banno F."/>
            <person name="Bowser L."/>
            <person name="Brooks S.Y."/>
            <person name="Carninci P."/>
            <person name="Chao Q."/>
            <person name="Choy N."/>
            <person name="Enju A."/>
            <person name="Goldsmith A.D."/>
            <person name="Gurjal M."/>
            <person name="Hansen N.F."/>
            <person name="Hayashizaki Y."/>
            <person name="Johnson-Hopson C."/>
            <person name="Hsuan V.W."/>
            <person name="Iida K."/>
            <person name="Karnes M."/>
            <person name="Khan S."/>
            <person name="Koesema E."/>
            <person name="Ishida J."/>
            <person name="Jiang P.X."/>
            <person name="Jones T."/>
            <person name="Kawai J."/>
            <person name="Kamiya A."/>
            <person name="Meyers C."/>
            <person name="Nakajima M."/>
            <person name="Narusaka M."/>
            <person name="Seki M."/>
            <person name="Sakurai T."/>
            <person name="Satou M."/>
            <person name="Tamse R."/>
            <person name="Vaysberg M."/>
            <person name="Wallender E.K."/>
            <person name="Wong C."/>
            <person name="Yamamura Y."/>
            <person name="Yuan S."/>
            <person name="Shinozaki K."/>
            <person name="Davis R.W."/>
            <person name="Theologis A."/>
            <person name="Ecker J.R."/>
        </authorList>
    </citation>
    <scope>NUCLEOTIDE SEQUENCE [LARGE SCALE MRNA] OF 57-382</scope>
    <source>
        <strain>cv. Columbia</strain>
    </source>
</reference>
<reference key="5">
    <citation type="journal article" date="1999" name="Development">
        <title>Shoot apical meristem and cotyledon formation during Arabidopsis embryogenesis: interaction among the CUP-SHAPED COTYLEDON and SHOOT MERISTEMLESS genes.</title>
        <authorList>
            <person name="Aida M."/>
            <person name="Ishida T."/>
            <person name="Tasaka M."/>
        </authorList>
    </citation>
    <scope>FUNCTION</scope>
    <scope>DEVELOPMENTAL STAGE</scope>
</reference>
<reference key="6">
    <citation type="journal article" date="2001" name="Plant Cell">
        <title>The Arabidopsis BELL1 and KNOX TALE homeodomain proteins interact through a domain conserved between plants and animals.</title>
        <authorList>
            <person name="Bellaoui M."/>
            <person name="Pidkowich M.S."/>
            <person name="Samach A."/>
            <person name="Kushalappa K."/>
            <person name="Kohalmi S.E."/>
            <person name="Modrusan Z."/>
            <person name="Crosby W.L."/>
            <person name="Haughn G.W."/>
        </authorList>
    </citation>
    <scope>INTERACTION WITH BEL1</scope>
</reference>
<reference key="7">
    <citation type="journal article" date="2002" name="Development">
        <title>ASYMMETRIC LEAVES1 reveals knox gene redundancy in Arabidopsis.</title>
        <authorList>
            <person name="Byrne M.E."/>
            <person name="Simorowski J."/>
            <person name="Martienssen R.A."/>
        </authorList>
    </citation>
    <scope>FUNCTION</scope>
</reference>
<reference key="8">
    <citation type="journal article" date="2006" name="Nucleic Acids Res.">
        <title>Nuclear import of the transcription factor SHOOT MERISTEMLESS depends on heterodimerization with BLH proteins expressed in discrete sub-domains of the shoot apical meristem of Arabidopsis thaliana.</title>
        <authorList>
            <person name="Cole M."/>
            <person name="Nolte C."/>
            <person name="Werr W."/>
        </authorList>
    </citation>
    <scope>INTERACTION WITH TALE/BELL PROTEINS</scope>
    <scope>SUBCELLULAR LOCATION</scope>
</reference>
<reference key="9">
    <citation type="journal article" date="2006" name="Planta">
        <title>Arabidopsis inflorescence architecture requires the activities of KNOX-BELL homeodomain heterodimers.</title>
        <authorList>
            <person name="Kanrar S."/>
            <person name="Onguka O."/>
            <person name="Smith H.M.S."/>
        </authorList>
    </citation>
    <scope>INTERACTION WITH BLH8/PNF</scope>
</reference>
<reference key="10">
    <citation type="journal article" date="2007" name="Plant Cell">
        <title>MPB2C, a microtubule-associated protein, regulates non-cell-autonomy of the homeodomain protein KNOTTED1.</title>
        <authorList>
            <person name="Winter N."/>
            <person name="Kollwig G."/>
            <person name="Zhang S."/>
            <person name="Kragler F."/>
        </authorList>
    </citation>
    <scope>INTERACTION WITH MBP2C</scope>
    <scope>SUBCELLULAR LOCATION</scope>
    <scope>HOMODIMERIZATION</scope>
</reference>
<reference key="11">
    <citation type="journal article" date="2011" name="Science">
        <title>Chaperonins facilitate KNOTTED1 cell-to-cell trafficking and stem cell function.</title>
        <authorList>
            <person name="Xu X.M."/>
            <person name="Wang J."/>
            <person name="Xuan Z."/>
            <person name="Goldshmidt A."/>
            <person name="Borrill P.G."/>
            <person name="Hariharan N."/>
            <person name="Kim J.Y."/>
            <person name="Jackson D."/>
        </authorList>
    </citation>
    <scope>INTERACTION WITH CCT8</scope>
</reference>
<reference key="12">
    <citation type="journal article" date="2018" name="Cell Rep.">
        <title>FTIP-dependent STM trafficking regulates shoot meristem development in Arabidopsis.</title>
        <authorList>
            <person name="Liu L."/>
            <person name="Li C."/>
            <person name="Song S."/>
            <person name="Teo Z.W.N."/>
            <person name="Shen L."/>
            <person name="Wang Y."/>
            <person name="Jackson D."/>
            <person name="Yu H."/>
        </authorList>
    </citation>
    <scope>SUBCELLULAR LOCATION</scope>
    <scope>INTERACTION WITH FTIP3 AND FTIP4</scope>
    <source>
        <strain>cv. Columbia</strain>
    </source>
</reference>
<protein>
    <recommendedName>
        <fullName evidence="11">Homeobox protein SHOOT MERISTEMLESS</fullName>
    </recommendedName>
</protein>
<gene>
    <name evidence="11" type="primary">STM</name>
    <name evidence="13" type="ordered locus">At1g62360</name>
    <name evidence="14" type="ORF">F2401.9</name>
</gene>
<feature type="chain" id="PRO_0000049316" description="Homeobox protein SHOOT MERISTEMLESS">
    <location>
        <begin position="1"/>
        <end position="382"/>
    </location>
</feature>
<feature type="domain" description="ELK" evidence="3">
    <location>
        <begin position="262"/>
        <end position="282"/>
    </location>
</feature>
<feature type="DNA-binding region" description="Homeobox; TALE-type" evidence="2">
    <location>
        <begin position="283"/>
        <end position="346"/>
    </location>
</feature>
<feature type="region of interest" description="Disordered" evidence="4">
    <location>
        <begin position="26"/>
        <end position="59"/>
    </location>
</feature>
<feature type="compositionally biased region" description="Basic and acidic residues" evidence="4">
    <location>
        <begin position="44"/>
        <end position="53"/>
    </location>
</feature>
<feature type="sequence conflict" description="In Ref. 1; AAC49148." evidence="12" ref="1">
    <original>S</original>
    <variation>F</variation>
    <location>
        <position position="115"/>
    </location>
</feature>
<feature type="sequence conflict" description="In Ref. 2; AAF70849." evidence="12" ref="2">
    <location>
        <begin position="229"/>
        <end position="233"/>
    </location>
</feature>
<feature type="sequence conflict" description="In Ref. 1; AAC49148." evidence="12" ref="1">
    <original>G</original>
    <variation>D</variation>
    <location>
        <position position="369"/>
    </location>
</feature>